<name>RIMP_STRTD</name>
<keyword id="KW-0963">Cytoplasm</keyword>
<keyword id="KW-0690">Ribosome biogenesis</keyword>
<proteinExistence type="inferred from homology"/>
<reference key="1">
    <citation type="journal article" date="2006" name="Proc. Natl. Acad. Sci. U.S.A.">
        <title>Comparative genomics of the lactic acid bacteria.</title>
        <authorList>
            <person name="Makarova K.S."/>
            <person name="Slesarev A."/>
            <person name="Wolf Y.I."/>
            <person name="Sorokin A."/>
            <person name="Mirkin B."/>
            <person name="Koonin E.V."/>
            <person name="Pavlov A."/>
            <person name="Pavlova N."/>
            <person name="Karamychev V."/>
            <person name="Polouchine N."/>
            <person name="Shakhova V."/>
            <person name="Grigoriev I."/>
            <person name="Lou Y."/>
            <person name="Rohksar D."/>
            <person name="Lucas S."/>
            <person name="Huang K."/>
            <person name="Goodstein D.M."/>
            <person name="Hawkins T."/>
            <person name="Plengvidhya V."/>
            <person name="Welker D."/>
            <person name="Hughes J."/>
            <person name="Goh Y."/>
            <person name="Benson A."/>
            <person name="Baldwin K."/>
            <person name="Lee J.-H."/>
            <person name="Diaz-Muniz I."/>
            <person name="Dosti B."/>
            <person name="Smeianov V."/>
            <person name="Wechter W."/>
            <person name="Barabote R."/>
            <person name="Lorca G."/>
            <person name="Altermann E."/>
            <person name="Barrangou R."/>
            <person name="Ganesan B."/>
            <person name="Xie Y."/>
            <person name="Rawsthorne H."/>
            <person name="Tamir D."/>
            <person name="Parker C."/>
            <person name="Breidt F."/>
            <person name="Broadbent J.R."/>
            <person name="Hutkins R."/>
            <person name="O'Sullivan D."/>
            <person name="Steele J."/>
            <person name="Unlu G."/>
            <person name="Saier M.H. Jr."/>
            <person name="Klaenhammer T."/>
            <person name="Richardson P."/>
            <person name="Kozyavkin S."/>
            <person name="Weimer B.C."/>
            <person name="Mills D.A."/>
        </authorList>
    </citation>
    <scope>NUCLEOTIDE SEQUENCE [LARGE SCALE GENOMIC DNA]</scope>
    <source>
        <strain>ATCC BAA-491 / LMD-9</strain>
    </source>
</reference>
<gene>
    <name evidence="1" type="primary">rimP</name>
    <name type="ordered locus">STER_0379</name>
</gene>
<sequence>MSQKIIDLVTAVVAPAIPDPYELVDIEYEKIGSDYILSVLIDKPGGITVEDTADLTEIISPLLDTIQPDPFPDQYMLEVSSPGLERPLKTKEALKNAVGQYINVSLYKAIDKIKIFQGDLLAFDGETLTIDYLDKTRHKTVEIPYQTVAKARLAVKL</sequence>
<accession>Q03M92</accession>
<dbReference type="EMBL" id="CP000419">
    <property type="protein sequence ID" value="ABJ65680.1"/>
    <property type="molecule type" value="Genomic_DNA"/>
</dbReference>
<dbReference type="RefSeq" id="WP_011680755.1">
    <property type="nucleotide sequence ID" value="NZ_CP086001.1"/>
</dbReference>
<dbReference type="SMR" id="Q03M92"/>
<dbReference type="GeneID" id="66898257"/>
<dbReference type="KEGG" id="ste:STER_0379"/>
<dbReference type="HOGENOM" id="CLU_070525_2_0_9"/>
<dbReference type="GO" id="GO:0005829">
    <property type="term" value="C:cytosol"/>
    <property type="evidence" value="ECO:0007669"/>
    <property type="project" value="TreeGrafter"/>
</dbReference>
<dbReference type="GO" id="GO:0000028">
    <property type="term" value="P:ribosomal small subunit assembly"/>
    <property type="evidence" value="ECO:0007669"/>
    <property type="project" value="TreeGrafter"/>
</dbReference>
<dbReference type="GO" id="GO:0006412">
    <property type="term" value="P:translation"/>
    <property type="evidence" value="ECO:0007669"/>
    <property type="project" value="TreeGrafter"/>
</dbReference>
<dbReference type="CDD" id="cd01734">
    <property type="entry name" value="YlxS_C"/>
    <property type="match status" value="1"/>
</dbReference>
<dbReference type="Gene3D" id="2.30.30.180">
    <property type="entry name" value="Ribosome maturation factor RimP, C-terminal domain"/>
    <property type="match status" value="1"/>
</dbReference>
<dbReference type="Gene3D" id="3.30.300.70">
    <property type="entry name" value="RimP-like superfamily, N-terminal"/>
    <property type="match status" value="1"/>
</dbReference>
<dbReference type="HAMAP" id="MF_01077">
    <property type="entry name" value="RimP"/>
    <property type="match status" value="1"/>
</dbReference>
<dbReference type="InterPro" id="IPR003728">
    <property type="entry name" value="Ribosome_maturation_RimP"/>
</dbReference>
<dbReference type="InterPro" id="IPR028998">
    <property type="entry name" value="RimP_C"/>
</dbReference>
<dbReference type="InterPro" id="IPR036847">
    <property type="entry name" value="RimP_C_sf"/>
</dbReference>
<dbReference type="InterPro" id="IPR028989">
    <property type="entry name" value="RimP_N"/>
</dbReference>
<dbReference type="InterPro" id="IPR035956">
    <property type="entry name" value="RimP_N_sf"/>
</dbReference>
<dbReference type="NCBIfam" id="NF000928">
    <property type="entry name" value="PRK00092.1-2"/>
    <property type="match status" value="1"/>
</dbReference>
<dbReference type="PANTHER" id="PTHR33867">
    <property type="entry name" value="RIBOSOME MATURATION FACTOR RIMP"/>
    <property type="match status" value="1"/>
</dbReference>
<dbReference type="PANTHER" id="PTHR33867:SF1">
    <property type="entry name" value="RIBOSOME MATURATION FACTOR RIMP"/>
    <property type="match status" value="1"/>
</dbReference>
<dbReference type="Pfam" id="PF17384">
    <property type="entry name" value="DUF150_C"/>
    <property type="match status" value="1"/>
</dbReference>
<dbReference type="Pfam" id="PF02576">
    <property type="entry name" value="RimP_N"/>
    <property type="match status" value="1"/>
</dbReference>
<dbReference type="SUPFAM" id="SSF74942">
    <property type="entry name" value="YhbC-like, C-terminal domain"/>
    <property type="match status" value="1"/>
</dbReference>
<dbReference type="SUPFAM" id="SSF75420">
    <property type="entry name" value="YhbC-like, N-terminal domain"/>
    <property type="match status" value="1"/>
</dbReference>
<protein>
    <recommendedName>
        <fullName evidence="1">Ribosome maturation factor RimP</fullName>
    </recommendedName>
</protein>
<evidence type="ECO:0000255" key="1">
    <source>
        <dbReference type="HAMAP-Rule" id="MF_01077"/>
    </source>
</evidence>
<comment type="function">
    <text evidence="1">Required for maturation of 30S ribosomal subunits.</text>
</comment>
<comment type="subcellular location">
    <subcellularLocation>
        <location evidence="1">Cytoplasm</location>
    </subcellularLocation>
</comment>
<comment type="similarity">
    <text evidence="1">Belongs to the RimP family.</text>
</comment>
<feature type="chain" id="PRO_0000384787" description="Ribosome maturation factor RimP">
    <location>
        <begin position="1"/>
        <end position="157"/>
    </location>
</feature>
<organism>
    <name type="scientific">Streptococcus thermophilus (strain ATCC BAA-491 / LMD-9)</name>
    <dbReference type="NCBI Taxonomy" id="322159"/>
    <lineage>
        <taxon>Bacteria</taxon>
        <taxon>Bacillati</taxon>
        <taxon>Bacillota</taxon>
        <taxon>Bacilli</taxon>
        <taxon>Lactobacillales</taxon>
        <taxon>Streptococcaceae</taxon>
        <taxon>Streptococcus</taxon>
    </lineage>
</organism>